<dbReference type="EMBL" id="CP000425">
    <property type="protein sequence ID" value="ABJ72558.1"/>
    <property type="molecule type" value="Genomic_DNA"/>
</dbReference>
<dbReference type="RefSeq" id="WP_011675899.1">
    <property type="nucleotide sequence ID" value="NC_008527.1"/>
</dbReference>
<dbReference type="SMR" id="Q02ZR4"/>
<dbReference type="KEGG" id="llc:LACR_1020"/>
<dbReference type="HOGENOM" id="CLU_048704_0_0_9"/>
<dbReference type="Proteomes" id="UP000000240">
    <property type="component" value="Chromosome"/>
</dbReference>
<dbReference type="CDD" id="cd08025">
    <property type="entry name" value="RNR_PFL_like_DUF711"/>
    <property type="match status" value="1"/>
</dbReference>
<dbReference type="Gene3D" id="3.20.70.20">
    <property type="match status" value="1"/>
</dbReference>
<dbReference type="HAMAP" id="MF_01221">
    <property type="entry name" value="UPF0210"/>
    <property type="match status" value="1"/>
</dbReference>
<dbReference type="InterPro" id="IPR007841">
    <property type="entry name" value="UPF0210"/>
</dbReference>
<dbReference type="NCBIfam" id="NF003700">
    <property type="entry name" value="PRK05313.1"/>
    <property type="match status" value="1"/>
</dbReference>
<dbReference type="PANTHER" id="PTHR37560:SF1">
    <property type="entry name" value="UPF0210 PROTEIN MJ1665"/>
    <property type="match status" value="1"/>
</dbReference>
<dbReference type="PANTHER" id="PTHR37560">
    <property type="entry name" value="UPF0210 PROTEIN SPR0218"/>
    <property type="match status" value="1"/>
</dbReference>
<dbReference type="Pfam" id="PF05167">
    <property type="entry name" value="DUF711"/>
    <property type="match status" value="1"/>
</dbReference>
<dbReference type="SUPFAM" id="SSF51998">
    <property type="entry name" value="PFL-like glycyl radical enzymes"/>
    <property type="match status" value="1"/>
</dbReference>
<protein>
    <recommendedName>
        <fullName evidence="1">UPF0210 protein LACR_1020</fullName>
    </recommendedName>
</protein>
<proteinExistence type="inferred from homology"/>
<comment type="subunit">
    <text evidence="1">Homodimer.</text>
</comment>
<comment type="similarity">
    <text evidence="1">Belongs to the UPF0210 family.</text>
</comment>
<feature type="chain" id="PRO_1000066756" description="UPF0210 protein LACR_1020">
    <location>
        <begin position="1"/>
        <end position="445"/>
    </location>
</feature>
<reference key="1">
    <citation type="journal article" date="2006" name="Proc. Natl. Acad. Sci. U.S.A.">
        <title>Comparative genomics of the lactic acid bacteria.</title>
        <authorList>
            <person name="Makarova K.S."/>
            <person name="Slesarev A."/>
            <person name="Wolf Y.I."/>
            <person name="Sorokin A."/>
            <person name="Mirkin B."/>
            <person name="Koonin E.V."/>
            <person name="Pavlov A."/>
            <person name="Pavlova N."/>
            <person name="Karamychev V."/>
            <person name="Polouchine N."/>
            <person name="Shakhova V."/>
            <person name="Grigoriev I."/>
            <person name="Lou Y."/>
            <person name="Rohksar D."/>
            <person name="Lucas S."/>
            <person name="Huang K."/>
            <person name="Goodstein D.M."/>
            <person name="Hawkins T."/>
            <person name="Plengvidhya V."/>
            <person name="Welker D."/>
            <person name="Hughes J."/>
            <person name="Goh Y."/>
            <person name="Benson A."/>
            <person name="Baldwin K."/>
            <person name="Lee J.-H."/>
            <person name="Diaz-Muniz I."/>
            <person name="Dosti B."/>
            <person name="Smeianov V."/>
            <person name="Wechter W."/>
            <person name="Barabote R."/>
            <person name="Lorca G."/>
            <person name="Altermann E."/>
            <person name="Barrangou R."/>
            <person name="Ganesan B."/>
            <person name="Xie Y."/>
            <person name="Rawsthorne H."/>
            <person name="Tamir D."/>
            <person name="Parker C."/>
            <person name="Breidt F."/>
            <person name="Broadbent J.R."/>
            <person name="Hutkins R."/>
            <person name="O'Sullivan D."/>
            <person name="Steele J."/>
            <person name="Unlu G."/>
            <person name="Saier M.H. Jr."/>
            <person name="Klaenhammer T."/>
            <person name="Richardson P."/>
            <person name="Kozyavkin S."/>
            <person name="Weimer B.C."/>
            <person name="Mills D.A."/>
        </authorList>
    </citation>
    <scope>NUCLEOTIDE SEQUENCE [LARGE SCALE GENOMIC DNA]</scope>
    <source>
        <strain>SK11</strain>
    </source>
</reference>
<evidence type="ECO:0000255" key="1">
    <source>
        <dbReference type="HAMAP-Rule" id="MF_01221"/>
    </source>
</evidence>
<organism>
    <name type="scientific">Lactococcus lactis subsp. cremoris (strain SK11)</name>
    <dbReference type="NCBI Taxonomy" id="272622"/>
    <lineage>
        <taxon>Bacteria</taxon>
        <taxon>Bacillati</taxon>
        <taxon>Bacillota</taxon>
        <taxon>Bacilli</taxon>
        <taxon>Lactobacillales</taxon>
        <taxon>Streptococcaceae</taxon>
        <taxon>Lactococcus</taxon>
        <taxon>Lactococcus cremoris subsp. cremoris</taxon>
    </lineage>
</organism>
<sequence>MDIQNIKETIAMIEEQNFDIRTITMGISLLDCIDADIDKAAEKIYQKIVNKAGKLVEVGNEIGHELGIKIVNKRVSVTPIAIIGAATAADDYTPLALAMDRAAKEIGIDFIGGYSALVQKGYQKGDEILIKSMPKALAATERVCASVNVGSTKSGINMTAVRDMGETIKIMSKGDKWLNAKLVVFANAVEDNPFMAGAFHGVGEADTIINVGVSGPGVVKRALEKVRGESFDILAETIKKTAFKITRIGQLVGQMASERLNVEFGIVDLSLAPTPAIGDSVARVLEEMGLETVGTHGTTAALAMLNDAVKKGGVMAAERVGGLSGAFIPVSEDEGMIAAVNSGALNIEKLEAMTCVCSVGLDMIAIPEETPASTIAAMIADEAAIGVINQKTTAVRIIPMGKEGEQIEFGGLFGVAPVMRVNKASSADFIARGGQIPAPIHSFKN</sequence>
<name>Y1020_LACLS</name>
<gene>
    <name type="ordered locus">LACR_1020</name>
</gene>
<accession>Q02ZR4</accession>